<accession>P54625</accession>
<accession>B3NSH7</accession>
<protein>
    <recommendedName>
        <fullName>Trypsin beta</fullName>
        <ecNumber>3.4.21.4</ecNumber>
    </recommendedName>
</protein>
<feature type="signal peptide" evidence="3">
    <location>
        <begin position="1"/>
        <end position="22"/>
    </location>
</feature>
<feature type="propeptide" id="PRO_0000028263" description="Activation peptide">
    <location>
        <begin position="23"/>
        <end position="30"/>
    </location>
</feature>
<feature type="chain" id="PRO_0000028264" description="Trypsin beta">
    <location>
        <begin position="31"/>
        <end position="253"/>
    </location>
</feature>
<feature type="domain" description="Peptidase S1" evidence="2">
    <location>
        <begin position="31"/>
        <end position="253"/>
    </location>
</feature>
<feature type="active site" description="Charge relay system" evidence="1">
    <location>
        <position position="71"/>
    </location>
</feature>
<feature type="active site" description="Charge relay system" evidence="1">
    <location>
        <position position="116"/>
    </location>
</feature>
<feature type="active site" description="Charge relay system" evidence="1">
    <location>
        <position position="210"/>
    </location>
</feature>
<feature type="site" description="Required for specificity" evidence="1">
    <location>
        <position position="204"/>
    </location>
</feature>
<feature type="disulfide bond" evidence="2">
    <location>
        <begin position="56"/>
        <end position="72"/>
    </location>
</feature>
<feature type="disulfide bond" evidence="2">
    <location>
        <begin position="180"/>
        <end position="197"/>
    </location>
</feature>
<feature type="disulfide bond" evidence="2">
    <location>
        <begin position="206"/>
        <end position="230"/>
    </location>
</feature>
<sequence>MLKFVILLSAVACALGGTIPEGLLPQLDGRIVGGTATTISSFPWQISLQRSGSHSCGGSIYTDRVIVTAAHCLQSVSASSLQIRAGSSYWSSGGVTVKVSSFKNHEGYNPNTMVNDIAVIRLSSSLGFSSTIKSISLASSNPANGAAASVSGWGTQSSGSSSIPSQLQYVNVNIVSQSKCASSAYGYGSEIRNTMICAAASGKDACQGDSGGPLVSGGVLVGVVSWGYGCAYSNYPGVYASVADLRSWVINNA</sequence>
<comment type="catalytic activity">
    <reaction>
        <text>Preferential cleavage: Arg-|-Xaa, Lys-|-Xaa.</text>
        <dbReference type="EC" id="3.4.21.4"/>
    </reaction>
</comment>
<comment type="subcellular location">
    <subcellularLocation>
        <location>Secreted</location>
        <location>Extracellular space</location>
    </subcellularLocation>
</comment>
<comment type="similarity">
    <text evidence="2">Belongs to the peptidase S1 family.</text>
</comment>
<keyword id="KW-1015">Disulfide bond</keyword>
<keyword id="KW-0378">Hydrolase</keyword>
<keyword id="KW-0645">Protease</keyword>
<keyword id="KW-0964">Secreted</keyword>
<keyword id="KW-0720">Serine protease</keyword>
<keyword id="KW-0732">Signal</keyword>
<keyword id="KW-0865">Zymogen</keyword>
<organism>
    <name type="scientific">Drosophila erecta</name>
    <name type="common">Fruit fly</name>
    <dbReference type="NCBI Taxonomy" id="7220"/>
    <lineage>
        <taxon>Eukaryota</taxon>
        <taxon>Metazoa</taxon>
        <taxon>Ecdysozoa</taxon>
        <taxon>Arthropoda</taxon>
        <taxon>Hexapoda</taxon>
        <taxon>Insecta</taxon>
        <taxon>Pterygota</taxon>
        <taxon>Neoptera</taxon>
        <taxon>Endopterygota</taxon>
        <taxon>Diptera</taxon>
        <taxon>Brachycera</taxon>
        <taxon>Muscomorpha</taxon>
        <taxon>Ephydroidea</taxon>
        <taxon>Drosophilidae</taxon>
        <taxon>Drosophila</taxon>
        <taxon>Sophophora</taxon>
    </lineage>
</organism>
<name>TRYB_DROER</name>
<gene>
    <name type="primary">betaTry</name>
    <name type="ORF">GG20194</name>
</gene>
<reference key="1">
    <citation type="journal article" date="1999" name="Mol. Biol. Evol.">
        <title>Concerted evolution within a trypsin gene cluster in Drosophila.</title>
        <authorList>
            <person name="Wang S."/>
            <person name="Magoulas C."/>
            <person name="Hickey D.A."/>
        </authorList>
    </citation>
    <scope>NUCLEOTIDE SEQUENCE [GENOMIC DNA]</scope>
</reference>
<reference key="2">
    <citation type="journal article" date="2007" name="Nature">
        <title>Evolution of genes and genomes on the Drosophila phylogeny.</title>
        <authorList>
            <consortium name="Drosophila 12 genomes consortium"/>
        </authorList>
    </citation>
    <scope>NUCLEOTIDE SEQUENCE [LARGE SCALE GENOMIC DNA]</scope>
    <source>
        <strain>Tucson 14021-0224.01</strain>
    </source>
</reference>
<proteinExistence type="inferred from homology"/>
<dbReference type="EC" id="3.4.21.4"/>
<dbReference type="EMBL" id="U40653">
    <property type="protein sequence ID" value="AAA83241.1"/>
    <property type="molecule type" value="Genomic_DNA"/>
</dbReference>
<dbReference type="EMBL" id="CH954179">
    <property type="protein sequence ID" value="EDV56479.1"/>
    <property type="molecule type" value="Genomic_DNA"/>
</dbReference>
<dbReference type="SMR" id="P54625"/>
<dbReference type="MEROPS" id="S01.110"/>
<dbReference type="EnsemblMetazoa" id="FBtr0140248">
    <property type="protein sequence ID" value="FBpp0138740"/>
    <property type="gene ID" value="FBgn0015077"/>
</dbReference>
<dbReference type="EnsemblMetazoa" id="XM_001976043.3">
    <property type="protein sequence ID" value="XP_001976079.1"/>
    <property type="gene ID" value="LOC6547181"/>
</dbReference>
<dbReference type="GeneID" id="6547181"/>
<dbReference type="KEGG" id="der:6547181"/>
<dbReference type="eggNOG" id="KOG3627">
    <property type="taxonomic scope" value="Eukaryota"/>
</dbReference>
<dbReference type="HOGENOM" id="CLU_006842_7_1_1"/>
<dbReference type="OMA" id="NPNTMIN"/>
<dbReference type="OrthoDB" id="10059102at2759"/>
<dbReference type="PhylomeDB" id="P54625"/>
<dbReference type="Proteomes" id="UP000008711">
    <property type="component" value="Unassembled WGS sequence"/>
</dbReference>
<dbReference type="GO" id="GO:0005576">
    <property type="term" value="C:extracellular region"/>
    <property type="evidence" value="ECO:0007669"/>
    <property type="project" value="UniProtKB-SubCell"/>
</dbReference>
<dbReference type="GO" id="GO:0004252">
    <property type="term" value="F:serine-type endopeptidase activity"/>
    <property type="evidence" value="ECO:0007669"/>
    <property type="project" value="UniProtKB-EC"/>
</dbReference>
<dbReference type="GO" id="GO:0006508">
    <property type="term" value="P:proteolysis"/>
    <property type="evidence" value="ECO:0007669"/>
    <property type="project" value="UniProtKB-KW"/>
</dbReference>
<dbReference type="CDD" id="cd00190">
    <property type="entry name" value="Tryp_SPc"/>
    <property type="match status" value="1"/>
</dbReference>
<dbReference type="FunFam" id="2.40.10.10:FF:000077">
    <property type="entry name" value="Predicted protein"/>
    <property type="match status" value="1"/>
</dbReference>
<dbReference type="Gene3D" id="2.40.10.10">
    <property type="entry name" value="Trypsin-like serine proteases"/>
    <property type="match status" value="2"/>
</dbReference>
<dbReference type="InterPro" id="IPR050430">
    <property type="entry name" value="Peptidase_S1"/>
</dbReference>
<dbReference type="InterPro" id="IPR009003">
    <property type="entry name" value="Peptidase_S1_PA"/>
</dbReference>
<dbReference type="InterPro" id="IPR043504">
    <property type="entry name" value="Peptidase_S1_PA_chymotrypsin"/>
</dbReference>
<dbReference type="InterPro" id="IPR001314">
    <property type="entry name" value="Peptidase_S1A"/>
</dbReference>
<dbReference type="InterPro" id="IPR001254">
    <property type="entry name" value="Trypsin_dom"/>
</dbReference>
<dbReference type="InterPro" id="IPR018114">
    <property type="entry name" value="TRYPSIN_HIS"/>
</dbReference>
<dbReference type="InterPro" id="IPR033116">
    <property type="entry name" value="TRYPSIN_SER"/>
</dbReference>
<dbReference type="PANTHER" id="PTHR24276:SF91">
    <property type="entry name" value="AT26814P-RELATED"/>
    <property type="match status" value="1"/>
</dbReference>
<dbReference type="PANTHER" id="PTHR24276">
    <property type="entry name" value="POLYSERASE-RELATED"/>
    <property type="match status" value="1"/>
</dbReference>
<dbReference type="Pfam" id="PF00089">
    <property type="entry name" value="Trypsin"/>
    <property type="match status" value="1"/>
</dbReference>
<dbReference type="PRINTS" id="PR00722">
    <property type="entry name" value="CHYMOTRYPSIN"/>
</dbReference>
<dbReference type="SMART" id="SM00020">
    <property type="entry name" value="Tryp_SPc"/>
    <property type="match status" value="1"/>
</dbReference>
<dbReference type="SUPFAM" id="SSF50494">
    <property type="entry name" value="Trypsin-like serine proteases"/>
    <property type="match status" value="1"/>
</dbReference>
<dbReference type="PROSITE" id="PS50240">
    <property type="entry name" value="TRYPSIN_DOM"/>
    <property type="match status" value="1"/>
</dbReference>
<dbReference type="PROSITE" id="PS00134">
    <property type="entry name" value="TRYPSIN_HIS"/>
    <property type="match status" value="1"/>
</dbReference>
<dbReference type="PROSITE" id="PS00135">
    <property type="entry name" value="TRYPSIN_SER"/>
    <property type="match status" value="1"/>
</dbReference>
<evidence type="ECO:0000250" key="1"/>
<evidence type="ECO:0000255" key="2">
    <source>
        <dbReference type="PROSITE-ProRule" id="PRU00274"/>
    </source>
</evidence>
<evidence type="ECO:0000305" key="3"/>